<dbReference type="EMBL" id="CH476626">
    <property type="protein sequence ID" value="EDO02807.1"/>
    <property type="molecule type" value="Genomic_DNA"/>
</dbReference>
<dbReference type="RefSeq" id="XP_001593856.1">
    <property type="nucleotide sequence ID" value="XM_001593806.1"/>
</dbReference>
<dbReference type="SMR" id="A7EIZ1"/>
<dbReference type="FunCoup" id="A7EIZ1">
    <property type="interactions" value="539"/>
</dbReference>
<dbReference type="STRING" id="665079.A7EIZ1"/>
<dbReference type="EnsemblFungi" id="EDO02807">
    <property type="protein sequence ID" value="EDO02807"/>
    <property type="gene ID" value="SS1G_05284"/>
</dbReference>
<dbReference type="GeneID" id="5490020"/>
<dbReference type="KEGG" id="ssl:SS1G_05284"/>
<dbReference type="VEuPathDB" id="FungiDB:sscle_08g065550"/>
<dbReference type="eggNOG" id="KOG2239">
    <property type="taxonomic scope" value="Eukaryota"/>
</dbReference>
<dbReference type="HOGENOM" id="CLU_057806_2_0_1"/>
<dbReference type="InParanoid" id="A7EIZ1"/>
<dbReference type="OMA" id="SQKMIFA"/>
<dbReference type="OrthoDB" id="3169036at2759"/>
<dbReference type="Proteomes" id="UP000001312">
    <property type="component" value="Unassembled WGS sequence"/>
</dbReference>
<dbReference type="GO" id="GO:0005737">
    <property type="term" value="C:cytoplasm"/>
    <property type="evidence" value="ECO:0000318"/>
    <property type="project" value="GO_Central"/>
</dbReference>
<dbReference type="GO" id="GO:0005854">
    <property type="term" value="C:nascent polypeptide-associated complex"/>
    <property type="evidence" value="ECO:0007669"/>
    <property type="project" value="InterPro"/>
</dbReference>
<dbReference type="GO" id="GO:0005634">
    <property type="term" value="C:nucleus"/>
    <property type="evidence" value="ECO:0007669"/>
    <property type="project" value="UniProtKB-SubCell"/>
</dbReference>
<dbReference type="GO" id="GO:0051082">
    <property type="term" value="F:unfolded protein binding"/>
    <property type="evidence" value="ECO:0000318"/>
    <property type="project" value="GO_Central"/>
</dbReference>
<dbReference type="GO" id="GO:0006612">
    <property type="term" value="P:protein targeting to membrane"/>
    <property type="evidence" value="ECO:0000318"/>
    <property type="project" value="GO_Central"/>
</dbReference>
<dbReference type="GO" id="GO:0015031">
    <property type="term" value="P:protein transport"/>
    <property type="evidence" value="ECO:0007669"/>
    <property type="project" value="UniProtKB-KW"/>
</dbReference>
<dbReference type="CDD" id="cd22054">
    <property type="entry name" value="NAC_NACA"/>
    <property type="match status" value="1"/>
</dbReference>
<dbReference type="CDD" id="cd14358">
    <property type="entry name" value="UBA_NAC_euk"/>
    <property type="match status" value="1"/>
</dbReference>
<dbReference type="FunFam" id="2.20.70.30:FF:000002">
    <property type="entry name" value="Nascent polypeptide-associated complex (NAC), alpha subunit"/>
    <property type="match status" value="1"/>
</dbReference>
<dbReference type="FunFam" id="1.10.8.10:FF:000006">
    <property type="entry name" value="Putative nascent polypeptide-associated complex subunit alpha"/>
    <property type="match status" value="1"/>
</dbReference>
<dbReference type="Gene3D" id="1.10.8.10">
    <property type="entry name" value="DNA helicase RuvA subunit, C-terminal domain"/>
    <property type="match status" value="1"/>
</dbReference>
<dbReference type="Gene3D" id="2.20.70.30">
    <property type="entry name" value="Nascent polypeptide-associated complex domain"/>
    <property type="match status" value="1"/>
</dbReference>
<dbReference type="InterPro" id="IPR016641">
    <property type="entry name" value="EGD2/NACA0like"/>
</dbReference>
<dbReference type="InterPro" id="IPR044034">
    <property type="entry name" value="NAC-like_UBA"/>
</dbReference>
<dbReference type="InterPro" id="IPR038187">
    <property type="entry name" value="NAC_A/B_dom_sf"/>
</dbReference>
<dbReference type="InterPro" id="IPR002715">
    <property type="entry name" value="Nas_poly-pep-assoc_cplx_dom"/>
</dbReference>
<dbReference type="PANTHER" id="PTHR21713">
    <property type="entry name" value="NASCENT POLYPEPTIDE ASSOCIATED COMPLEX ALPHA SUBUNIT-RELATED"/>
    <property type="match status" value="1"/>
</dbReference>
<dbReference type="Pfam" id="PF01849">
    <property type="entry name" value="NAC"/>
    <property type="match status" value="1"/>
</dbReference>
<dbReference type="Pfam" id="PF19026">
    <property type="entry name" value="UBA_HYPK"/>
    <property type="match status" value="1"/>
</dbReference>
<dbReference type="PIRSF" id="PIRSF015901">
    <property type="entry name" value="NAC_alpha"/>
    <property type="match status" value="1"/>
</dbReference>
<dbReference type="SMART" id="SM01407">
    <property type="entry name" value="NAC"/>
    <property type="match status" value="1"/>
</dbReference>
<dbReference type="PROSITE" id="PS51151">
    <property type="entry name" value="NAC_AB"/>
    <property type="match status" value="1"/>
</dbReference>
<organism>
    <name type="scientific">Sclerotinia sclerotiorum (strain ATCC 18683 / 1980 / Ss-1)</name>
    <name type="common">White mold</name>
    <name type="synonym">Whetzelinia sclerotiorum</name>
    <dbReference type="NCBI Taxonomy" id="665079"/>
    <lineage>
        <taxon>Eukaryota</taxon>
        <taxon>Fungi</taxon>
        <taxon>Dikarya</taxon>
        <taxon>Ascomycota</taxon>
        <taxon>Pezizomycotina</taxon>
        <taxon>Leotiomycetes</taxon>
        <taxon>Helotiales</taxon>
        <taxon>Sclerotiniaceae</taxon>
        <taxon>Sclerotinia</taxon>
    </lineage>
</organism>
<feature type="chain" id="PRO_0000310162" description="Nascent polypeptide-associated complex subunit alpha">
    <location>
        <begin position="1"/>
        <end position="214"/>
    </location>
</feature>
<feature type="domain" description="NAC-A/B" evidence="2">
    <location>
        <begin position="52"/>
        <end position="117"/>
    </location>
</feature>
<feature type="domain" description="UBA">
    <location>
        <begin position="175"/>
        <end position="214"/>
    </location>
</feature>
<feature type="region of interest" description="Disordered" evidence="3">
    <location>
        <begin position="1"/>
        <end position="57"/>
    </location>
</feature>
<feature type="region of interest" description="Disordered" evidence="3">
    <location>
        <begin position="119"/>
        <end position="179"/>
    </location>
</feature>
<feature type="compositionally biased region" description="Acidic residues" evidence="3">
    <location>
        <begin position="22"/>
        <end position="38"/>
    </location>
</feature>
<feature type="compositionally biased region" description="Low complexity" evidence="3">
    <location>
        <begin position="119"/>
        <end position="128"/>
    </location>
</feature>
<feature type="compositionally biased region" description="Basic and acidic residues" evidence="3">
    <location>
        <begin position="129"/>
        <end position="159"/>
    </location>
</feature>
<feature type="compositionally biased region" description="Acidic residues" evidence="3">
    <location>
        <begin position="160"/>
        <end position="171"/>
    </location>
</feature>
<sequence>MSNPRIEELPDNEEPTKQQVTAEDEGSDSSDSEGEGEVESGIPAGAGAVVHSRNEKKARKSIAKLGLTRVPGITRVTLRRPKNILFVINNPEVYKSPTSNTYIVFGEAKIEDLNSQAQASAAAQLAAQESHDHAGHDHSGHDHSHDHGKGKAVDTGDEKKEEEEDDTEEVDATGLEDKDIELVMTQASVSRNKAVKALKENDNDIVNSIMALSI</sequence>
<name>NACA_SCLS1</name>
<reference key="1">
    <citation type="journal article" date="2011" name="PLoS Genet.">
        <title>Genomic analysis of the necrotrophic fungal pathogens Sclerotinia sclerotiorum and Botrytis cinerea.</title>
        <authorList>
            <person name="Amselem J."/>
            <person name="Cuomo C.A."/>
            <person name="van Kan J.A.L."/>
            <person name="Viaud M."/>
            <person name="Benito E.P."/>
            <person name="Couloux A."/>
            <person name="Coutinho P.M."/>
            <person name="de Vries R.P."/>
            <person name="Dyer P.S."/>
            <person name="Fillinger S."/>
            <person name="Fournier E."/>
            <person name="Gout L."/>
            <person name="Hahn M."/>
            <person name="Kohn L."/>
            <person name="Lapalu N."/>
            <person name="Plummer K.M."/>
            <person name="Pradier J.-M."/>
            <person name="Quevillon E."/>
            <person name="Sharon A."/>
            <person name="Simon A."/>
            <person name="ten Have A."/>
            <person name="Tudzynski B."/>
            <person name="Tudzynski P."/>
            <person name="Wincker P."/>
            <person name="Andrew M."/>
            <person name="Anthouard V."/>
            <person name="Beever R.E."/>
            <person name="Beffa R."/>
            <person name="Benoit I."/>
            <person name="Bouzid O."/>
            <person name="Brault B."/>
            <person name="Chen Z."/>
            <person name="Choquer M."/>
            <person name="Collemare J."/>
            <person name="Cotton P."/>
            <person name="Danchin E.G."/>
            <person name="Da Silva C."/>
            <person name="Gautier A."/>
            <person name="Giraud C."/>
            <person name="Giraud T."/>
            <person name="Gonzalez C."/>
            <person name="Grossetete S."/>
            <person name="Gueldener U."/>
            <person name="Henrissat B."/>
            <person name="Howlett B.J."/>
            <person name="Kodira C."/>
            <person name="Kretschmer M."/>
            <person name="Lappartient A."/>
            <person name="Leroch M."/>
            <person name="Levis C."/>
            <person name="Mauceli E."/>
            <person name="Neuveglise C."/>
            <person name="Oeser B."/>
            <person name="Pearson M."/>
            <person name="Poulain J."/>
            <person name="Poussereau N."/>
            <person name="Quesneville H."/>
            <person name="Rascle C."/>
            <person name="Schumacher J."/>
            <person name="Segurens B."/>
            <person name="Sexton A."/>
            <person name="Silva E."/>
            <person name="Sirven C."/>
            <person name="Soanes D.M."/>
            <person name="Talbot N.J."/>
            <person name="Templeton M."/>
            <person name="Yandava C."/>
            <person name="Yarden O."/>
            <person name="Zeng Q."/>
            <person name="Rollins J.A."/>
            <person name="Lebrun M.-H."/>
            <person name="Dickman M."/>
        </authorList>
    </citation>
    <scope>NUCLEOTIDE SEQUENCE [LARGE SCALE GENOMIC DNA]</scope>
    <source>
        <strain>ATCC 18683 / 1980 / Ss-1</strain>
    </source>
</reference>
<comment type="function">
    <text evidence="1">Component of the nascent polypeptide-associated complex (NAC), a dynamic component of the ribosomal exit tunnel, protecting the emerging polypeptides from interaction with other cytoplasmic proteins to ensure appropriate nascent protein targeting. The NAC complex also promotes mitochondrial protein import by enhancing productive ribosome interactions with the outer mitochondrial membrane and blocks the inappropriate interaction of ribosomes translating non-secretory nascent polypeptides with translocation sites in the membrane of the endoplasmic reticulum. EGD2 may also be involved in transcription regulation (By similarity).</text>
</comment>
<comment type="subunit">
    <text evidence="1">Part of the nascent polypeptide-associated complex (NAC), consisting of EGD2 and EGD1. NAC associates with ribosomes via EGD1 (By similarity).</text>
</comment>
<comment type="subcellular location">
    <subcellularLocation>
        <location evidence="1">Cytoplasm</location>
    </subcellularLocation>
    <subcellularLocation>
        <location evidence="1">Nucleus</location>
    </subcellularLocation>
    <text evidence="1">Predominantly cytoplasmic, may also transiently localize to the nucleus.</text>
</comment>
<comment type="similarity">
    <text evidence="4">Belongs to the NAC-alpha family.</text>
</comment>
<keyword id="KW-0963">Cytoplasm</keyword>
<keyword id="KW-0539">Nucleus</keyword>
<keyword id="KW-0653">Protein transport</keyword>
<keyword id="KW-1185">Reference proteome</keyword>
<keyword id="KW-0813">Transport</keyword>
<protein>
    <recommendedName>
        <fullName>Nascent polypeptide-associated complex subunit alpha</fullName>
        <shortName>NAC-alpha</shortName>
    </recommendedName>
    <alternativeName>
        <fullName>Alpha-NAC</fullName>
    </alternativeName>
</protein>
<gene>
    <name type="primary">egd2</name>
    <name type="ORF">SS1G_05284</name>
</gene>
<accession>A7EIZ1</accession>
<evidence type="ECO:0000250" key="1"/>
<evidence type="ECO:0000255" key="2">
    <source>
        <dbReference type="PROSITE-ProRule" id="PRU00507"/>
    </source>
</evidence>
<evidence type="ECO:0000256" key="3">
    <source>
        <dbReference type="SAM" id="MobiDB-lite"/>
    </source>
</evidence>
<evidence type="ECO:0000305" key="4"/>
<proteinExistence type="inferred from homology"/>